<proteinExistence type="predicted"/>
<sequence>MAHTVFVPTGRFPQGIYKKDLSFTLNFRKKNITLDDNFDICVFLVNEEDDEFQVTLTSNEISLVKVIDDENGDKTIEEFIEKIISEEMLHLKNKTQFKKGLYHYNNGDWEQTENLSD</sequence>
<organismHost>
    <name type="scientific">Acheta domesticus</name>
    <name type="common">House cricket</name>
    <dbReference type="NCBI Taxonomy" id="6997"/>
</organismHost>
<organismHost>
    <name type="scientific">Chilo suppressalis</name>
    <name type="common">Asiatic rice borer moth</name>
    <dbReference type="NCBI Taxonomy" id="168631"/>
</organismHost>
<organismHost>
    <name type="scientific">Gryllus bimaculatus</name>
    <name type="common">Two-spotted cricket</name>
    <dbReference type="NCBI Taxonomy" id="6999"/>
</organismHost>
<organismHost>
    <name type="scientific">Gryllus campestris</name>
    <dbReference type="NCBI Taxonomy" id="58607"/>
</organismHost>
<organismHost>
    <name type="scientific">Spodoptera frugiperda</name>
    <name type="common">Fall armyworm</name>
    <dbReference type="NCBI Taxonomy" id="7108"/>
</organismHost>
<reference key="1">
    <citation type="journal article" date="2001" name="Virology">
        <title>Analysis of the first complete DNA sequence of an invertebrate iridovirus: coding strategy of the genome of Chilo iridescent virus.</title>
        <authorList>
            <person name="Jakob N.J."/>
            <person name="Mueller K."/>
            <person name="Bahr U."/>
            <person name="Darai G."/>
        </authorList>
    </citation>
    <scope>NUCLEOTIDE SEQUENCE [LARGE SCALE GENOMIC DNA]</scope>
</reference>
<reference key="2">
    <citation type="journal article" date="2007" name="Virol. J.">
        <title>Comparative genomic analysis of the family Iridoviridae: re-annotating and defining the core set of iridovirus genes.</title>
        <authorList>
            <person name="Eaton H.E."/>
            <person name="Metcalf J."/>
            <person name="Penny E."/>
            <person name="Tcherepanov V."/>
            <person name="Upton C."/>
            <person name="Brunetti C.R."/>
        </authorList>
    </citation>
    <scope>GENOME REANNOTATION</scope>
</reference>
<gene>
    <name type="ORF">IIV6-247L</name>
</gene>
<dbReference type="EMBL" id="AF303741">
    <property type="protein sequence ID" value="AAK82108.1"/>
    <property type="molecule type" value="Genomic_DNA"/>
</dbReference>
<dbReference type="RefSeq" id="NP_149710.1">
    <property type="nucleotide sequence ID" value="NC_003038.1"/>
</dbReference>
<dbReference type="SMR" id="Q91FS5"/>
<dbReference type="KEGG" id="vg:1733298"/>
<dbReference type="Proteomes" id="UP000001359">
    <property type="component" value="Genome"/>
</dbReference>
<organism>
    <name type="scientific">Invertebrate iridescent virus 6</name>
    <name type="common">IIV-6</name>
    <name type="synonym">Chilo iridescent virus</name>
    <dbReference type="NCBI Taxonomy" id="176652"/>
    <lineage>
        <taxon>Viruses</taxon>
        <taxon>Varidnaviria</taxon>
        <taxon>Bamfordvirae</taxon>
        <taxon>Nucleocytoviricota</taxon>
        <taxon>Megaviricetes</taxon>
        <taxon>Pimascovirales</taxon>
        <taxon>Iridoviridae</taxon>
        <taxon>Betairidovirinae</taxon>
        <taxon>Iridovirus</taxon>
    </lineage>
</organism>
<accession>Q91FS5</accession>
<feature type="chain" id="PRO_0000377830" description="Uncharacterized protein 247L">
    <location>
        <begin position="1"/>
        <end position="117"/>
    </location>
</feature>
<protein>
    <recommendedName>
        <fullName>Uncharacterized protein 247L</fullName>
    </recommendedName>
</protein>
<keyword id="KW-1185">Reference proteome</keyword>
<name>247L_IIV6</name>